<reference key="1">
    <citation type="journal article" date="2002" name="Nature">
        <title>The genome sequence of Schizosaccharomyces pombe.</title>
        <authorList>
            <person name="Wood V."/>
            <person name="Gwilliam R."/>
            <person name="Rajandream M.A."/>
            <person name="Lyne M.H."/>
            <person name="Lyne R."/>
            <person name="Stewart A."/>
            <person name="Sgouros J.G."/>
            <person name="Peat N."/>
            <person name="Hayles J."/>
            <person name="Baker S.G."/>
            <person name="Basham D."/>
            <person name="Bowman S."/>
            <person name="Brooks K."/>
            <person name="Brown D."/>
            <person name="Brown S."/>
            <person name="Chillingworth T."/>
            <person name="Churcher C.M."/>
            <person name="Collins M."/>
            <person name="Connor R."/>
            <person name="Cronin A."/>
            <person name="Davis P."/>
            <person name="Feltwell T."/>
            <person name="Fraser A."/>
            <person name="Gentles S."/>
            <person name="Goble A."/>
            <person name="Hamlin N."/>
            <person name="Harris D.E."/>
            <person name="Hidalgo J."/>
            <person name="Hodgson G."/>
            <person name="Holroyd S."/>
            <person name="Hornsby T."/>
            <person name="Howarth S."/>
            <person name="Huckle E.J."/>
            <person name="Hunt S."/>
            <person name="Jagels K."/>
            <person name="James K.D."/>
            <person name="Jones L."/>
            <person name="Jones M."/>
            <person name="Leather S."/>
            <person name="McDonald S."/>
            <person name="McLean J."/>
            <person name="Mooney P."/>
            <person name="Moule S."/>
            <person name="Mungall K.L."/>
            <person name="Murphy L.D."/>
            <person name="Niblett D."/>
            <person name="Odell C."/>
            <person name="Oliver K."/>
            <person name="O'Neil S."/>
            <person name="Pearson D."/>
            <person name="Quail M.A."/>
            <person name="Rabbinowitsch E."/>
            <person name="Rutherford K.M."/>
            <person name="Rutter S."/>
            <person name="Saunders D."/>
            <person name="Seeger K."/>
            <person name="Sharp S."/>
            <person name="Skelton J."/>
            <person name="Simmonds M.N."/>
            <person name="Squares R."/>
            <person name="Squares S."/>
            <person name="Stevens K."/>
            <person name="Taylor K."/>
            <person name="Taylor R.G."/>
            <person name="Tivey A."/>
            <person name="Walsh S.V."/>
            <person name="Warren T."/>
            <person name="Whitehead S."/>
            <person name="Woodward J.R."/>
            <person name="Volckaert G."/>
            <person name="Aert R."/>
            <person name="Robben J."/>
            <person name="Grymonprez B."/>
            <person name="Weltjens I."/>
            <person name="Vanstreels E."/>
            <person name="Rieger M."/>
            <person name="Schaefer M."/>
            <person name="Mueller-Auer S."/>
            <person name="Gabel C."/>
            <person name="Fuchs M."/>
            <person name="Duesterhoeft A."/>
            <person name="Fritzc C."/>
            <person name="Holzer E."/>
            <person name="Moestl D."/>
            <person name="Hilbert H."/>
            <person name="Borzym K."/>
            <person name="Langer I."/>
            <person name="Beck A."/>
            <person name="Lehrach H."/>
            <person name="Reinhardt R."/>
            <person name="Pohl T.M."/>
            <person name="Eger P."/>
            <person name="Zimmermann W."/>
            <person name="Wedler H."/>
            <person name="Wambutt R."/>
            <person name="Purnelle B."/>
            <person name="Goffeau A."/>
            <person name="Cadieu E."/>
            <person name="Dreano S."/>
            <person name="Gloux S."/>
            <person name="Lelaure V."/>
            <person name="Mottier S."/>
            <person name="Galibert F."/>
            <person name="Aves S.J."/>
            <person name="Xiang Z."/>
            <person name="Hunt C."/>
            <person name="Moore K."/>
            <person name="Hurst S.M."/>
            <person name="Lucas M."/>
            <person name="Rochet M."/>
            <person name="Gaillardin C."/>
            <person name="Tallada V.A."/>
            <person name="Garzon A."/>
            <person name="Thode G."/>
            <person name="Daga R.R."/>
            <person name="Cruzado L."/>
            <person name="Jimenez J."/>
            <person name="Sanchez M."/>
            <person name="del Rey F."/>
            <person name="Benito J."/>
            <person name="Dominguez A."/>
            <person name="Revuelta J.L."/>
            <person name="Moreno S."/>
            <person name="Armstrong J."/>
            <person name="Forsburg S.L."/>
            <person name="Cerutti L."/>
            <person name="Lowe T."/>
            <person name="McCombie W.R."/>
            <person name="Paulsen I."/>
            <person name="Potashkin J."/>
            <person name="Shpakovski G.V."/>
            <person name="Ussery D."/>
            <person name="Barrell B.G."/>
            <person name="Nurse P."/>
        </authorList>
    </citation>
    <scope>NUCLEOTIDE SEQUENCE [LARGE SCALE GENOMIC DNA]</scope>
    <source>
        <strain>972 / ATCC 24843</strain>
    </source>
</reference>
<reference key="2">
    <citation type="journal article" date="2004" name="Biochem. Biophys. Res. Commun.">
        <title>The fission yeast ptr1+ gene involved in nuclear mRNA export encodes a putative ubiquitin ligase.</title>
        <authorList>
            <person name="Andoh T."/>
            <person name="Azad A.K."/>
            <person name="Shigematsu A."/>
            <person name="Ohshima Y."/>
            <person name="Tani T."/>
        </authorList>
    </citation>
    <scope>FUNCTION</scope>
    <scope>MUTANT PTR1-1</scope>
</reference>
<comment type="function">
    <text evidence="3">Probable ubiquitin ligase protein involved in mRNA export. E3 ubiquitin ligase proteins mediate ubiquitination and subsequent proteasomal degradation of target proteins. Probably participates in mRNA export from the nucleus by regulating the transport of hnRNP proteins such as rae1.</text>
</comment>
<comment type="catalytic activity">
    <reaction>
        <text>S-ubiquitinyl-[E2 ubiquitin-conjugating enzyme]-L-cysteine + [acceptor protein]-L-lysine = [E2 ubiquitin-conjugating enzyme]-L-cysteine + N(6)-ubiquitinyl-[acceptor protein]-L-lysine.</text>
        <dbReference type="EC" id="2.3.2.26"/>
    </reaction>
</comment>
<comment type="pathway">
    <text>Protein modification; protein ubiquitination.</text>
</comment>
<comment type="subcellular location">
    <subcellularLocation>
        <location>Nucleus</location>
    </subcellularLocation>
</comment>
<comment type="similarity">
    <text evidence="4">Belongs to the UPL family. TOM1/PTR1 subfamily.</text>
</comment>
<gene>
    <name type="primary">ptr1</name>
    <name type="ORF">SPAC19D5.04</name>
</gene>
<evidence type="ECO:0000255" key="1">
    <source>
        <dbReference type="PROSITE-ProRule" id="PRU00104"/>
    </source>
</evidence>
<evidence type="ECO:0000256" key="2">
    <source>
        <dbReference type="SAM" id="MobiDB-lite"/>
    </source>
</evidence>
<evidence type="ECO:0000269" key="3">
    <source>
    </source>
</evidence>
<evidence type="ECO:0000305" key="4"/>
<name>PTR1_SCHPO</name>
<organism>
    <name type="scientific">Schizosaccharomyces pombe (strain 972 / ATCC 24843)</name>
    <name type="common">Fission yeast</name>
    <dbReference type="NCBI Taxonomy" id="284812"/>
    <lineage>
        <taxon>Eukaryota</taxon>
        <taxon>Fungi</taxon>
        <taxon>Dikarya</taxon>
        <taxon>Ascomycota</taxon>
        <taxon>Taphrinomycotina</taxon>
        <taxon>Schizosaccharomycetes</taxon>
        <taxon>Schizosaccharomycetales</taxon>
        <taxon>Schizosaccharomycetaceae</taxon>
        <taxon>Schizosaccharomyces</taxon>
    </lineage>
</organism>
<feature type="chain" id="PRO_0000120347" description="E3 ubiquitin-protein ligase ptr1">
    <location>
        <begin position="1"/>
        <end position="3227"/>
    </location>
</feature>
<feature type="domain" description="HECT" evidence="1">
    <location>
        <begin position="2891"/>
        <end position="3227"/>
    </location>
</feature>
<feature type="region of interest" description="Disordered" evidence="2">
    <location>
        <begin position="1806"/>
        <end position="1836"/>
    </location>
</feature>
<feature type="region of interest" description="Disordered" evidence="2">
    <location>
        <begin position="1869"/>
        <end position="1894"/>
    </location>
</feature>
<feature type="region of interest" description="Disordered" evidence="2">
    <location>
        <begin position="1908"/>
        <end position="1929"/>
    </location>
</feature>
<feature type="region of interest" description="Disordered" evidence="2">
    <location>
        <begin position="2577"/>
        <end position="2607"/>
    </location>
</feature>
<feature type="compositionally biased region" description="Low complexity" evidence="2">
    <location>
        <begin position="1811"/>
        <end position="1823"/>
    </location>
</feature>
<feature type="compositionally biased region" description="Acidic residues" evidence="2">
    <location>
        <begin position="1883"/>
        <end position="1894"/>
    </location>
</feature>
<feature type="compositionally biased region" description="Polar residues" evidence="2">
    <location>
        <begin position="2577"/>
        <end position="2601"/>
    </location>
</feature>
<feature type="active site" description="Glycyl thioester intermediate" evidence="1">
    <location>
        <position position="3194"/>
    </location>
</feature>
<feature type="mutagenesis site" description="In ptr1-1; induces defects in mRNA export.">
    <original>L</original>
    <variation>Q</variation>
    <location>
        <position position="2887"/>
    </location>
</feature>
<keyword id="KW-0509">mRNA transport</keyword>
<keyword id="KW-0539">Nucleus</keyword>
<keyword id="KW-1185">Reference proteome</keyword>
<keyword id="KW-0808">Transferase</keyword>
<keyword id="KW-0813">Transport</keyword>
<keyword id="KW-0833">Ubl conjugation pathway</keyword>
<dbReference type="EC" id="2.3.2.26"/>
<dbReference type="EMBL" id="CU329670">
    <property type="protein sequence ID" value="CAB16714.1"/>
    <property type="molecule type" value="Genomic_DNA"/>
</dbReference>
<dbReference type="PIR" id="T37964">
    <property type="entry name" value="T37964"/>
</dbReference>
<dbReference type="RefSeq" id="NP_594902.1">
    <property type="nucleotide sequence ID" value="NM_001020331.2"/>
</dbReference>
<dbReference type="SMR" id="O13834"/>
<dbReference type="BioGRID" id="278994">
    <property type="interactions" value="9"/>
</dbReference>
<dbReference type="FunCoup" id="O13834">
    <property type="interactions" value="957"/>
</dbReference>
<dbReference type="STRING" id="284812.O13834"/>
<dbReference type="iPTMnet" id="O13834"/>
<dbReference type="PaxDb" id="4896-SPAC19D5.04.1"/>
<dbReference type="EnsemblFungi" id="SPAC19D5.04.1">
    <property type="protein sequence ID" value="SPAC19D5.04.1:pep"/>
    <property type="gene ID" value="SPAC19D5.04"/>
</dbReference>
<dbReference type="GeneID" id="2542537"/>
<dbReference type="KEGG" id="spo:2542537"/>
<dbReference type="PomBase" id="SPAC19D5.04">
    <property type="gene designation" value="ptr1"/>
</dbReference>
<dbReference type="VEuPathDB" id="FungiDB:SPAC19D5.04"/>
<dbReference type="eggNOG" id="KOG0939">
    <property type="taxonomic scope" value="Eukaryota"/>
</dbReference>
<dbReference type="HOGENOM" id="CLU_000215_0_1_1"/>
<dbReference type="InParanoid" id="O13834"/>
<dbReference type="OMA" id="DCHFSRE"/>
<dbReference type="PhylomeDB" id="O13834"/>
<dbReference type="Reactome" id="R-SPO-6798695">
    <property type="pathway name" value="Neutrophil degranulation"/>
</dbReference>
<dbReference type="Reactome" id="R-SPO-983168">
    <property type="pathway name" value="Antigen processing: Ubiquitination &amp; Proteasome degradation"/>
</dbReference>
<dbReference type="UniPathway" id="UPA00143"/>
<dbReference type="PRO" id="PR:O13834"/>
<dbReference type="Proteomes" id="UP000002485">
    <property type="component" value="Chromosome I"/>
</dbReference>
<dbReference type="GO" id="GO:0005737">
    <property type="term" value="C:cytoplasm"/>
    <property type="evidence" value="ECO:0000318"/>
    <property type="project" value="GO_Central"/>
</dbReference>
<dbReference type="GO" id="GO:0005634">
    <property type="term" value="C:nucleus"/>
    <property type="evidence" value="ECO:0007005"/>
    <property type="project" value="PomBase"/>
</dbReference>
<dbReference type="GO" id="GO:0061630">
    <property type="term" value="F:ubiquitin protein ligase activity"/>
    <property type="evidence" value="ECO:0000318"/>
    <property type="project" value="GO_Central"/>
</dbReference>
<dbReference type="GO" id="GO:0046907">
    <property type="term" value="P:intracellular transport"/>
    <property type="evidence" value="ECO:0007669"/>
    <property type="project" value="UniProtKB-ARBA"/>
</dbReference>
<dbReference type="GO" id="GO:0051028">
    <property type="term" value="P:mRNA transport"/>
    <property type="evidence" value="ECO:0007669"/>
    <property type="project" value="UniProtKB-KW"/>
</dbReference>
<dbReference type="GO" id="GO:0016567">
    <property type="term" value="P:protein ubiquitination"/>
    <property type="evidence" value="ECO:0007669"/>
    <property type="project" value="UniProtKB-UniPathway"/>
</dbReference>
<dbReference type="GO" id="GO:0006364">
    <property type="term" value="P:rRNA processing"/>
    <property type="evidence" value="ECO:0000266"/>
    <property type="project" value="PomBase"/>
</dbReference>
<dbReference type="GO" id="GO:0006511">
    <property type="term" value="P:ubiquitin-dependent protein catabolic process"/>
    <property type="evidence" value="ECO:0000318"/>
    <property type="project" value="GO_Central"/>
</dbReference>
<dbReference type="CDD" id="cd00078">
    <property type="entry name" value="HECTc"/>
    <property type="match status" value="1"/>
</dbReference>
<dbReference type="FunFam" id="3.30.2410.10:FF:000004">
    <property type="entry name" value="E3 ubiquitin-protein ligase HUWE1, variant"/>
    <property type="match status" value="1"/>
</dbReference>
<dbReference type="FunFam" id="3.30.2160.10:FF:000001">
    <property type="entry name" value="E3 ubiquitin-protein ligase NEDD4-like"/>
    <property type="match status" value="1"/>
</dbReference>
<dbReference type="FunFam" id="3.90.1750.10:FF:000003">
    <property type="entry name" value="E3 ubiquitin-protein ligase UPL1"/>
    <property type="match status" value="1"/>
</dbReference>
<dbReference type="Gene3D" id="3.30.2160.10">
    <property type="entry name" value="Hect, E3 ligase catalytic domain"/>
    <property type="match status" value="1"/>
</dbReference>
<dbReference type="Gene3D" id="3.30.2410.10">
    <property type="entry name" value="Hect, E3 ligase catalytic domain"/>
    <property type="match status" value="1"/>
</dbReference>
<dbReference type="Gene3D" id="3.90.1750.10">
    <property type="entry name" value="Hect, E3 ligase catalytic domains"/>
    <property type="match status" value="1"/>
</dbReference>
<dbReference type="InterPro" id="IPR010309">
    <property type="entry name" value="E3_Ub_ligase_DUF908"/>
</dbReference>
<dbReference type="InterPro" id="IPR010314">
    <property type="entry name" value="E3_Ub_ligase_DUF913"/>
</dbReference>
<dbReference type="InterPro" id="IPR050409">
    <property type="entry name" value="E3_ubiq-protein_ligase"/>
</dbReference>
<dbReference type="InterPro" id="IPR000569">
    <property type="entry name" value="HECT_dom"/>
</dbReference>
<dbReference type="InterPro" id="IPR035983">
    <property type="entry name" value="Hect_E3_ubiquitin_ligase"/>
</dbReference>
<dbReference type="InterPro" id="IPR025527">
    <property type="entry name" value="HUWE1/Rev1_UBM"/>
</dbReference>
<dbReference type="PANTHER" id="PTHR11254:SF67">
    <property type="entry name" value="E3 UBIQUITIN-PROTEIN LIGASE HUWE1"/>
    <property type="match status" value="1"/>
</dbReference>
<dbReference type="PANTHER" id="PTHR11254">
    <property type="entry name" value="HECT DOMAIN UBIQUITIN-PROTEIN LIGASE"/>
    <property type="match status" value="1"/>
</dbReference>
<dbReference type="Pfam" id="PF06012">
    <property type="entry name" value="DUF908"/>
    <property type="match status" value="1"/>
</dbReference>
<dbReference type="Pfam" id="PF06025">
    <property type="entry name" value="DUF913"/>
    <property type="match status" value="1"/>
</dbReference>
<dbReference type="Pfam" id="PF00632">
    <property type="entry name" value="HECT"/>
    <property type="match status" value="1"/>
</dbReference>
<dbReference type="Pfam" id="PF14377">
    <property type="entry name" value="UBM"/>
    <property type="match status" value="2"/>
</dbReference>
<dbReference type="SMART" id="SM00119">
    <property type="entry name" value="HECTc"/>
    <property type="match status" value="1"/>
</dbReference>
<dbReference type="SUPFAM" id="SSF56204">
    <property type="entry name" value="Hect, E3 ligase catalytic domain"/>
    <property type="match status" value="1"/>
</dbReference>
<dbReference type="PROSITE" id="PS50237">
    <property type="entry name" value="HECT"/>
    <property type="match status" value="1"/>
</dbReference>
<accession>O13834</accession>
<protein>
    <recommendedName>
        <fullName>E3 ubiquitin-protein ligase ptr1</fullName>
        <ecNumber>2.3.2.26</ecNumber>
    </recommendedName>
    <alternativeName>
        <fullName>HECT-type E3 ubiquitin transferase ptr1</fullName>
    </alternativeName>
    <alternativeName>
        <fullName>Poly(A)+ RNA transport protein 1</fullName>
    </alternativeName>
</protein>
<sequence>MRITKSPPKNQYSQPPPRVAEFIRQAQNEEVTSDLGLVSLCSEFRKNDWPYPRGDLYSWVPVLNRFDAILERIVEHYSLKDKVQTKPFDSDTLSILLEILSFSAHLLSHCANRSIYNSTVYLEYLLNSSVLEVIDSTLALLLHIVQKATISKRGKQLFSLSQDRLFRFLMFLPQDAMKTGFSQNYETLLFSNEIPQEWCSLELSYYKSSPSKDFSSASQPNSEGFSILKLPYNKVLGKPIEELLVKTLHDNQIPEQYSFDLLVSLMLRQNLYDINRRRLMIRIGLLALSNLVYAHSQAVQTRFLIADPEITTHLANLVSPDVDLPQNFKAVCFECFKAFFFKKSMIPSVLASLNVSVSYGLMMNLVRDFSKNLENPNFYYEREYVDSFYDFLQFMTSSPLGGNMACSAGLTSLLGYHLSVKTPQATYVVARSIVMLDHLIDGYSMAFPDFSESKGLDMLVDRVQYELEAGLQDIKSGKGNPEIVLNMDYAISYDRYFLLKNLLKFVLHLIQSGGSVVELRNLIDSSLISSLAFLLEHHEVYGSNLFASTTNIMSTFIHNEPTCYGIIHEKKLSHAFLDAVNRKILNSSDAITSIPLAFGAICLNSQGFDLFLEKNPIPQLFSIFTSLNHCKSLISSDNAAILGTYIDELMRHQPSLKDPIVKMIFKACDQVSALLDNFNPFQYINAKEYPYLLYLETFSSFLENIITNEGHARYLISKGIVSHVLNLIQHPVLAFGFIDSSAFNSFFVLLHHAVDFDAPEVFRPLLDCIITRCEEGITEFTIVSLKQATISLIKDSNMGHEDANNFLHFSIVGNLLTIFAELFSSHAALKKAGNLPLVQLFISPSRYAGIFDILCNIKSIATSLDIHICLGVSDDFVLCSDSLTTIVTDKDEKEKFETKKKELTQDSSFCKFQNIRSNFSQIAYGVSKFFTSLTRALGNTSVQDFNEYKMIHKLGSNIALVVDELINLSSKQITSHPQSLSIASLEASLIFVLGASSIIREDDSKVTLVLLISRLLGGCRTMDVLISLNETVSGFFRLSDRDPLSKSNRVLLALSSTLLNLILVFTSADFMSETSKTLNMALKSEFDMTDFNNSGSKLMHVLHARIFISVLHLWRSADDLHLPYITRALLTNVLSNCYQFEDGIKNVVDSINNLRTSIANGDIKEPLDVVTDDNTNSNFSLEETNASVTDMPESEKHENGIFQAYLLKEMPNDIVSQFEMLKSKQIELTVQMASYEGDLNQNLCDFLYTRDDVQMNADVQFSVTSGLIVEIKKLAQSTDCKAKNQLGPAVGLLSLFISHDFTQNKAKNCVLSELNFFLELLHSLNNGLPSDSHKTSIVCILYLLEVLLADSKKPDEFEFNSEDCSLKLTDGAITVDLASQKHIMSSVITLLSLNSANLGVVVSAFRVVVLLTSASEMIHTFVKLSGLPSLFKAMRACSGFCNESLHIPFISILRRLLEFDEVVELMMFDDLVNIFKLQGRARKTELHGFIRANAEMVLRSPECFIKILKDCCVLGHFTPESEHYYLELKESLPGVLQNGQTDLDPSKEQMSSVIVSFLLDELMDLTETRQFSDRSPNSEFTPENDSLYMYNVFLLQCLTELLSGYNACKRCFLNFQPRRKAPFFNLSRKYNSYLVGFFLEKLLPFGCIRLSENNEVRKAFSVSNWAISILVFLCAYSNEQQTQAVDEIRREVLTSVLKFYKSSSSFSENLEAYYCKLLVLAELCYRLCDAQTVSQKAPNHLLRRSQDQNVKTMIDLGYIPTLTNAISEIDMNYPVSRKVVRHILKPLQLLTKEAIFLSQTNPEALSGAAQDSMGDQSLSSSSEESSDSDREEPPDLYRNSVLGIFQGDIVNENDENYEDSEDDGVYEEMEFEDDQSGSADSVVSEDDADDVMYSDNDDMNIEFMVDEQDASSQNDDSSFDEASSHGDVISIDEEDLDNQGEEFEWEDEDNASSGYEDELDYNEDEVGENDSTTFEAMENAFTETSDNDDHLEEADHVSPVEIDFLENDENSSSEQDDEFQWEWNTETPSGADILSRHGALLRDLFPLPGLSRRVMIINSNDPSRSRPFLNNNASEGLLKHPLLLRNNLIHTPKATELWENLAEIDNHTASGAAFQRLLYYLALEIPNEDSSVLGWTSLKVSKHTDPLRATSDFIPLFSMQRWNSITSMFFAHASGSIALRITGSVLFALVPPALEKYNLENQKKEILENESKEEETRQPEVNIQPEEPINTSDMEGVTTEANEIGSYQEPSLINIRGREVDVSSLGIDPTFLLALPEEMREEVVFQHIQERHMESISDSSRRIDPSFLEVLPSDLRDELLFQEAVQMRLFDHATRNNNSVDHEVEMEEIDQGGTVSEHREKSVKPVKKIPVPNLLDRQGLYSLIRLIFISQHNGKNPYYDLIVNISENKQHRADIVGLLLYILQEASINDRASEKCYRDLTVKSLNNSQQKEVKKSTGLLESLCKVPVVNGISAPALILQQGIDLLSHLATWADHFASFFLSMHDFSGIASKKSAGRKNRESNVYKIAPINVLLGLLAREELFGNTLVMNTFSELLSTLTKPLLSFYKSEKLQKDSATTGYTNDQDSRGSTVPKQDPGTTASRKDKKILSPPNILDENLRLAASLITTDSCSSRTFQNALSVMFHLSSIPKAKILIGKELLRHGQEYGNSITNDLSRLCADVKSGKNESELQVALAPFCPASSNQAKLLRCLKALDYIFERRPKGQEQSPGNIIQLLEFYDNLKFSSLWEVLSECLSALRDHTSITHVSTVLLPLIESLMVICRLVFIELPEDVGKHISPILERFKTLFISFTEEHRKIINMMVFTTPSLMSGSFSLLVKNPKVLEFENKRNYFNRQLHEEAAKEQYPPLNITVRRDHVFLDSYRALHFKDADEVKFSKLNIHFRDEEGVDAGGVTREWLQVLARQMFNPDYALFLPVTGDATTFHPNRDSSVNPDHLSFFKFTGRIIGKALYDGRLLDCHFSRAVYKHMLHRSVSVKDIESLDPDYYKSLVWMLNNDITDIITEEFAVEKDVFGEKTVVDLIPNGRNIPVTELNKQNYVNRMVDYKLRESVKDQLKSLLDGFSDIIPSHLIQIFNEQELELLISGLPEIDIDDWKNNTEYHGYNVSSPQVQWFWRAVRSFDEEERAKLLQFATGTSKVPLNGFKELEGMSGFQRFNIHKSYGSLNRLPQSHTCFNQLDLPEYDTYEQLRSMLLTAINEGSEGFGFA</sequence>
<proteinExistence type="evidence at protein level"/>